<accession>Q8GXH3</accession>
<accession>O49428</accession>
<accession>Q2V3G8</accession>
<reference key="1">
    <citation type="journal article" date="1999" name="Nature">
        <title>Sequence and analysis of chromosome 4 of the plant Arabidopsis thaliana.</title>
        <authorList>
            <person name="Mayer K.F.X."/>
            <person name="Schueller C."/>
            <person name="Wambutt R."/>
            <person name="Murphy G."/>
            <person name="Volckaert G."/>
            <person name="Pohl T."/>
            <person name="Duesterhoeft A."/>
            <person name="Stiekema W."/>
            <person name="Entian K.-D."/>
            <person name="Terryn N."/>
            <person name="Harris B."/>
            <person name="Ansorge W."/>
            <person name="Brandt P."/>
            <person name="Grivell L.A."/>
            <person name="Rieger M."/>
            <person name="Weichselgartner M."/>
            <person name="de Simone V."/>
            <person name="Obermaier B."/>
            <person name="Mache R."/>
            <person name="Mueller M."/>
            <person name="Kreis M."/>
            <person name="Delseny M."/>
            <person name="Puigdomenech P."/>
            <person name="Watson M."/>
            <person name="Schmidtheini T."/>
            <person name="Reichert B."/>
            <person name="Portetelle D."/>
            <person name="Perez-Alonso M."/>
            <person name="Boutry M."/>
            <person name="Bancroft I."/>
            <person name="Vos P."/>
            <person name="Hoheisel J."/>
            <person name="Zimmermann W."/>
            <person name="Wedler H."/>
            <person name="Ridley P."/>
            <person name="Langham S.-A."/>
            <person name="McCullagh B."/>
            <person name="Bilham L."/>
            <person name="Robben J."/>
            <person name="van der Schueren J."/>
            <person name="Grymonprez B."/>
            <person name="Chuang Y.-J."/>
            <person name="Vandenbussche F."/>
            <person name="Braeken M."/>
            <person name="Weltjens I."/>
            <person name="Voet M."/>
            <person name="Bastiaens I."/>
            <person name="Aert R."/>
            <person name="Defoor E."/>
            <person name="Weitzenegger T."/>
            <person name="Bothe G."/>
            <person name="Ramsperger U."/>
            <person name="Hilbert H."/>
            <person name="Braun M."/>
            <person name="Holzer E."/>
            <person name="Brandt A."/>
            <person name="Peters S."/>
            <person name="van Staveren M."/>
            <person name="Dirkse W."/>
            <person name="Mooijman P."/>
            <person name="Klein Lankhorst R."/>
            <person name="Rose M."/>
            <person name="Hauf J."/>
            <person name="Koetter P."/>
            <person name="Berneiser S."/>
            <person name="Hempel S."/>
            <person name="Feldpausch M."/>
            <person name="Lamberth S."/>
            <person name="Van den Daele H."/>
            <person name="De Keyser A."/>
            <person name="Buysshaert C."/>
            <person name="Gielen J."/>
            <person name="Villarroel R."/>
            <person name="De Clercq R."/>
            <person name="van Montagu M."/>
            <person name="Rogers J."/>
            <person name="Cronin A."/>
            <person name="Quail M.A."/>
            <person name="Bray-Allen S."/>
            <person name="Clark L."/>
            <person name="Doggett J."/>
            <person name="Hall S."/>
            <person name="Kay M."/>
            <person name="Lennard N."/>
            <person name="McLay K."/>
            <person name="Mayes R."/>
            <person name="Pettett A."/>
            <person name="Rajandream M.A."/>
            <person name="Lyne M."/>
            <person name="Benes V."/>
            <person name="Rechmann S."/>
            <person name="Borkova D."/>
            <person name="Bloecker H."/>
            <person name="Scharfe M."/>
            <person name="Grimm M."/>
            <person name="Loehnert T.-H."/>
            <person name="Dose S."/>
            <person name="de Haan M."/>
            <person name="Maarse A.C."/>
            <person name="Schaefer M."/>
            <person name="Mueller-Auer S."/>
            <person name="Gabel C."/>
            <person name="Fuchs M."/>
            <person name="Fartmann B."/>
            <person name="Granderath K."/>
            <person name="Dauner D."/>
            <person name="Herzl A."/>
            <person name="Neumann S."/>
            <person name="Argiriou A."/>
            <person name="Vitale D."/>
            <person name="Liguori R."/>
            <person name="Piravandi E."/>
            <person name="Massenet O."/>
            <person name="Quigley F."/>
            <person name="Clabauld G."/>
            <person name="Muendlein A."/>
            <person name="Felber R."/>
            <person name="Schnabl S."/>
            <person name="Hiller R."/>
            <person name="Schmidt W."/>
            <person name="Lecharny A."/>
            <person name="Aubourg S."/>
            <person name="Chefdor F."/>
            <person name="Cooke R."/>
            <person name="Berger C."/>
            <person name="Monfort A."/>
            <person name="Casacuberta E."/>
            <person name="Gibbons T."/>
            <person name="Weber N."/>
            <person name="Vandenbol M."/>
            <person name="Bargues M."/>
            <person name="Terol J."/>
            <person name="Torres A."/>
            <person name="Perez-Perez A."/>
            <person name="Purnelle B."/>
            <person name="Bent E."/>
            <person name="Johnson S."/>
            <person name="Tacon D."/>
            <person name="Jesse T."/>
            <person name="Heijnen L."/>
            <person name="Schwarz S."/>
            <person name="Scholler P."/>
            <person name="Heber S."/>
            <person name="Francs P."/>
            <person name="Bielke C."/>
            <person name="Frishman D."/>
            <person name="Haase D."/>
            <person name="Lemcke K."/>
            <person name="Mewes H.-W."/>
            <person name="Stocker S."/>
            <person name="Zaccaria P."/>
            <person name="Bevan M."/>
            <person name="Wilson R.K."/>
            <person name="de la Bastide M."/>
            <person name="Habermann K."/>
            <person name="Parnell L."/>
            <person name="Dedhia N."/>
            <person name="Gnoj L."/>
            <person name="Schutz K."/>
            <person name="Huang E."/>
            <person name="Spiegel L."/>
            <person name="Sekhon M."/>
            <person name="Murray J."/>
            <person name="Sheet P."/>
            <person name="Cordes M."/>
            <person name="Abu-Threideh J."/>
            <person name="Stoneking T."/>
            <person name="Kalicki J."/>
            <person name="Graves T."/>
            <person name="Harmon G."/>
            <person name="Edwards J."/>
            <person name="Latreille P."/>
            <person name="Courtney L."/>
            <person name="Cloud J."/>
            <person name="Abbott A."/>
            <person name="Scott K."/>
            <person name="Johnson D."/>
            <person name="Minx P."/>
            <person name="Bentley D."/>
            <person name="Fulton B."/>
            <person name="Miller N."/>
            <person name="Greco T."/>
            <person name="Kemp K."/>
            <person name="Kramer J."/>
            <person name="Fulton L."/>
            <person name="Mardis E."/>
            <person name="Dante M."/>
            <person name="Pepin K."/>
            <person name="Hillier L.W."/>
            <person name="Nelson J."/>
            <person name="Spieth J."/>
            <person name="Ryan E."/>
            <person name="Andrews S."/>
            <person name="Geisel C."/>
            <person name="Layman D."/>
            <person name="Du H."/>
            <person name="Ali J."/>
            <person name="Berghoff A."/>
            <person name="Jones K."/>
            <person name="Drone K."/>
            <person name="Cotton M."/>
            <person name="Joshu C."/>
            <person name="Antonoiu B."/>
            <person name="Zidanic M."/>
            <person name="Strong C."/>
            <person name="Sun H."/>
            <person name="Lamar B."/>
            <person name="Yordan C."/>
            <person name="Ma P."/>
            <person name="Zhong J."/>
            <person name="Preston R."/>
            <person name="Vil D."/>
            <person name="Shekher M."/>
            <person name="Matero A."/>
            <person name="Shah R."/>
            <person name="Swaby I.K."/>
            <person name="O'Shaughnessy A."/>
            <person name="Rodriguez M."/>
            <person name="Hoffman J."/>
            <person name="Till S."/>
            <person name="Granat S."/>
            <person name="Shohdy N."/>
            <person name="Hasegawa A."/>
            <person name="Hameed A."/>
            <person name="Lodhi M."/>
            <person name="Johnson A."/>
            <person name="Chen E."/>
            <person name="Marra M.A."/>
            <person name="Martienssen R."/>
            <person name="McCombie W.R."/>
        </authorList>
    </citation>
    <scope>NUCLEOTIDE SEQUENCE [LARGE SCALE GENOMIC DNA]</scope>
    <source>
        <strain>cv. Columbia</strain>
    </source>
</reference>
<reference key="2">
    <citation type="journal article" date="2017" name="Plant J.">
        <title>Araport11: a complete reannotation of the Arabidopsis thaliana reference genome.</title>
        <authorList>
            <person name="Cheng C.Y."/>
            <person name="Krishnakumar V."/>
            <person name="Chan A.P."/>
            <person name="Thibaud-Nissen F."/>
            <person name="Schobel S."/>
            <person name="Town C.D."/>
        </authorList>
    </citation>
    <scope>GENOME REANNOTATION</scope>
    <source>
        <strain>cv. Columbia</strain>
    </source>
</reference>
<reference key="3">
    <citation type="journal article" date="2002" name="Science">
        <title>Functional annotation of a full-length Arabidopsis cDNA collection.</title>
        <authorList>
            <person name="Seki M."/>
            <person name="Narusaka M."/>
            <person name="Kamiya A."/>
            <person name="Ishida J."/>
            <person name="Satou M."/>
            <person name="Sakurai T."/>
            <person name="Nakajima M."/>
            <person name="Enju A."/>
            <person name="Akiyama K."/>
            <person name="Oono Y."/>
            <person name="Muramatsu M."/>
            <person name="Hayashizaki Y."/>
            <person name="Kawai J."/>
            <person name="Carninci P."/>
            <person name="Itoh M."/>
            <person name="Ishii Y."/>
            <person name="Arakawa T."/>
            <person name="Shibata K."/>
            <person name="Shinagawa A."/>
            <person name="Shinozaki K."/>
        </authorList>
    </citation>
    <scope>NUCLEOTIDE SEQUENCE [LARGE SCALE MRNA] (ISOFORM 1)</scope>
    <source>
        <strain>cv. Columbia</strain>
    </source>
</reference>
<reference key="4">
    <citation type="submission" date="2006-08" db="EMBL/GenBank/DDBJ databases">
        <title>Arabidopsis ORF Clones.</title>
        <authorList>
            <person name="Quinitio C."/>
            <person name="Chen H."/>
            <person name="Kim C.J."/>
            <person name="Shinn P."/>
            <person name="Ecker J.R."/>
        </authorList>
    </citation>
    <scope>NUCLEOTIDE SEQUENCE [LARGE SCALE MRNA] (ISOFORM 1)</scope>
</reference>
<reference key="5">
    <citation type="journal article" date="2006" name="Plant Cell">
        <title>pTAC2, -6, and -12 are components of the transcriptionally active plastid chromosome that are required for plastid gene expression.</title>
        <authorList>
            <person name="Pfalz J."/>
            <person name="Liere K."/>
            <person name="Kandlbinder A."/>
            <person name="Dietz K.-J."/>
            <person name="Oelmueller R."/>
        </authorList>
    </citation>
    <scope>IDENTIFICATION</scope>
</reference>
<reference key="6">
    <citation type="journal article" date="2006" name="J. Exp. Bot.">
        <title>Ethylene-dependent and -independent pathways controlling floral abscission are revealed to converge using promoter::reporter gene constructs in the ida abscission mutant.</title>
        <authorList>
            <person name="Butenko M.A."/>
            <person name="Stenvik G.-E."/>
            <person name="Alm V."/>
            <person name="Saether B."/>
            <person name="Patterson S.E."/>
            <person name="Aalen R.B."/>
        </authorList>
    </citation>
    <scope>TISSUE SPECIFICITY</scope>
</reference>
<reference key="7">
    <citation type="journal article" date="2006" name="Plant Cell">
        <title>The plant-specific ssDNA binding protein OSB1 is involved in the stoichiometric transmission of mitochondrial DNA in Arabidopsis.</title>
        <authorList>
            <person name="Zaegel V."/>
            <person name="Guermann B."/>
            <person name="Le Ret M."/>
            <person name="Andres C."/>
            <person name="Meyer D."/>
            <person name="Erhardt M."/>
            <person name="Canaday J."/>
            <person name="Gualberto J.M."/>
            <person name="Imbault P."/>
        </authorList>
    </citation>
    <scope>FUNCTION</scope>
    <scope>DNA-BINDING</scope>
    <scope>SUBCELLULAR LOCATION</scope>
    <scope>DISRUPTION PHENOTYPE</scope>
</reference>
<name>OSB2_ARATH</name>
<comment type="function">
    <text evidence="5">Binds preferentially single-stranded DNA. Does not bind to RNA.</text>
</comment>
<comment type="subcellular location">
    <subcellularLocation>
        <location evidence="5">Plastid</location>
        <location evidence="5">Chloroplast</location>
    </subcellularLocation>
</comment>
<comment type="alternative products">
    <event type="alternative splicing"/>
    <isoform>
        <id>Q8GXH3-1</id>
        <name>1</name>
        <sequence type="displayed"/>
    </isoform>
    <isoform>
        <id>Q8GXH3-2</id>
        <name>2</name>
        <sequence type="described" ref="VSP_038020"/>
    </isoform>
</comment>
<comment type="tissue specificity">
    <text evidence="4">Expressed in the floral abscission zone.</text>
</comment>
<comment type="disruption phenotype">
    <text evidence="5">No visible phenotype.</text>
</comment>
<keyword id="KW-0025">Alternative splicing</keyword>
<keyword id="KW-0150">Chloroplast</keyword>
<keyword id="KW-0238">DNA-binding</keyword>
<keyword id="KW-0934">Plastid</keyword>
<keyword id="KW-1185">Reference proteome</keyword>
<keyword id="KW-0677">Repeat</keyword>
<keyword id="KW-0809">Transit peptide</keyword>
<gene>
    <name type="primary">OSB2</name>
    <name type="synonym">FAA</name>
    <name type="synonym">PTAC9</name>
    <name type="ordered locus">At4g20010</name>
    <name type="ORF">F18F4.110</name>
</gene>
<feature type="transit peptide" description="Chloroplast" evidence="1">
    <location>
        <begin position="1"/>
        <end position="20"/>
    </location>
</feature>
<feature type="chain" id="PRO_0000383609" description="Protein OSB2, chloroplastic">
    <location>
        <begin position="21"/>
        <end position="371"/>
    </location>
</feature>
<feature type="domain" description="SSB" evidence="2">
    <location>
        <begin position="97"/>
        <end position="195"/>
    </location>
</feature>
<feature type="region of interest" description="Disordered" evidence="3">
    <location>
        <begin position="45"/>
        <end position="64"/>
    </location>
</feature>
<feature type="region of interest" description="PDF region 1">
    <location>
        <begin position="237"/>
        <end position="289"/>
    </location>
</feature>
<feature type="region of interest" description="PDF region 2">
    <location>
        <begin position="312"/>
        <end position="360"/>
    </location>
</feature>
<feature type="splice variant" id="VSP_038020" description="In isoform 2." evidence="6">
    <original>AR</original>
    <variation>GI</variation>
    <location>
        <begin position="222"/>
        <end position="223"/>
    </location>
</feature>
<feature type="sequence conflict" description="In Ref. 3; BAC42861." evidence="6" ref="3">
    <original>V</original>
    <variation>A</variation>
    <location>
        <position position="97"/>
    </location>
</feature>
<sequence length="371" mass="41729">MSLISKSLARIECSPFFYPRASEITTGKRITSPQIRLYTAAAVGGKTGNGERKQRAKAPAKTPEAVTPVKPLEIASVTATTENELPRPNEIAYESEVANWVNLIGFVDQPVQFEASSDGKFWAGTVISQRSASDSSGFWIPIIFEGDLAKTAARYVSKDDQIHVSGKLFIDSPPPNMTYAQANVQVLVQNLNFIQPMSPSPSPFMVMSSSEKEESGIKKQPARAKQDIVIDEASDSWNHLIENPKEWWDHRENKVNGLVKPRHPDFKSKDSSFSLWLNKAPNWVLPKLEGLEFDVLVPKARVVKQLKGEESWKDLVQNPDKWWDNRIDKRNAKAPDFKHKETGEALWLNESPTWVLPKLPPVKKKQESIVF</sequence>
<protein>
    <recommendedName>
        <fullName>Protein OSB2, chloroplastic</fullName>
    </recommendedName>
    <alternativeName>
        <fullName>Organellar single-stranded DNA-binding protein 2</fullName>
    </alternativeName>
    <alternativeName>
        <fullName>Protein FLORAL ABSCISSION ASSOCIATED</fullName>
    </alternativeName>
    <alternativeName>
        <fullName>Protein PLASTID TRANSCRIPTIONALLY ACTIVE 9</fullName>
    </alternativeName>
</protein>
<organism>
    <name type="scientific">Arabidopsis thaliana</name>
    <name type="common">Mouse-ear cress</name>
    <dbReference type="NCBI Taxonomy" id="3702"/>
    <lineage>
        <taxon>Eukaryota</taxon>
        <taxon>Viridiplantae</taxon>
        <taxon>Streptophyta</taxon>
        <taxon>Embryophyta</taxon>
        <taxon>Tracheophyta</taxon>
        <taxon>Spermatophyta</taxon>
        <taxon>Magnoliopsida</taxon>
        <taxon>eudicotyledons</taxon>
        <taxon>Gunneridae</taxon>
        <taxon>Pentapetalae</taxon>
        <taxon>rosids</taxon>
        <taxon>malvids</taxon>
        <taxon>Brassicales</taxon>
        <taxon>Brassicaceae</taxon>
        <taxon>Camelineae</taxon>
        <taxon>Arabidopsis</taxon>
    </lineage>
</organism>
<dbReference type="EMBL" id="AL021637">
    <property type="protein sequence ID" value="CAA16609.1"/>
    <property type="molecule type" value="Genomic_DNA"/>
</dbReference>
<dbReference type="EMBL" id="AL161552">
    <property type="protein sequence ID" value="CAB79001.1"/>
    <property type="molecule type" value="Genomic_DNA"/>
</dbReference>
<dbReference type="EMBL" id="CP002687">
    <property type="protein sequence ID" value="AEE84260.1"/>
    <property type="molecule type" value="Genomic_DNA"/>
</dbReference>
<dbReference type="EMBL" id="CP002687">
    <property type="protein sequence ID" value="AEE84261.1"/>
    <property type="molecule type" value="Genomic_DNA"/>
</dbReference>
<dbReference type="EMBL" id="AK118242">
    <property type="protein sequence ID" value="BAC42861.1"/>
    <property type="molecule type" value="mRNA"/>
</dbReference>
<dbReference type="EMBL" id="BT026461">
    <property type="protein sequence ID" value="ABH04568.1"/>
    <property type="molecule type" value="mRNA"/>
</dbReference>
<dbReference type="PIR" id="T04885">
    <property type="entry name" value="T04885"/>
</dbReference>
<dbReference type="RefSeq" id="NP_001031674.1">
    <molecule id="Q8GXH3-2"/>
    <property type="nucleotide sequence ID" value="NM_001036597.2"/>
</dbReference>
<dbReference type="RefSeq" id="NP_567593.1">
    <molecule id="Q8GXH3-1"/>
    <property type="nucleotide sequence ID" value="NM_118120.5"/>
</dbReference>
<dbReference type="SMR" id="Q8GXH3"/>
<dbReference type="FunCoup" id="Q8GXH3">
    <property type="interactions" value="745"/>
</dbReference>
<dbReference type="STRING" id="3702.Q8GXH3"/>
<dbReference type="PaxDb" id="3702-AT4G20010.1"/>
<dbReference type="ProteomicsDB" id="248828">
    <molecule id="Q8GXH3-1"/>
</dbReference>
<dbReference type="EnsemblPlants" id="AT4G20010.1">
    <molecule id="Q8GXH3-1"/>
    <property type="protein sequence ID" value="AT4G20010.1"/>
    <property type="gene ID" value="AT4G20010"/>
</dbReference>
<dbReference type="EnsemblPlants" id="AT4G20010.2">
    <molecule id="Q8GXH3-2"/>
    <property type="protein sequence ID" value="AT4G20010.2"/>
    <property type="gene ID" value="AT4G20010"/>
</dbReference>
<dbReference type="GeneID" id="827746"/>
<dbReference type="Gramene" id="AT4G20010.1">
    <molecule id="Q8GXH3-1"/>
    <property type="protein sequence ID" value="AT4G20010.1"/>
    <property type="gene ID" value="AT4G20010"/>
</dbReference>
<dbReference type="Gramene" id="AT4G20010.2">
    <molecule id="Q8GXH3-2"/>
    <property type="protein sequence ID" value="AT4G20010.2"/>
    <property type="gene ID" value="AT4G20010"/>
</dbReference>
<dbReference type="KEGG" id="ath:AT4G20010"/>
<dbReference type="Araport" id="AT4G20010"/>
<dbReference type="TAIR" id="AT4G20010">
    <property type="gene designation" value="PTAC9"/>
</dbReference>
<dbReference type="eggNOG" id="ENOG502QPSC">
    <property type="taxonomic scope" value="Eukaryota"/>
</dbReference>
<dbReference type="HOGENOM" id="CLU_035942_0_0_1"/>
<dbReference type="InParanoid" id="Q8GXH3"/>
<dbReference type="OMA" id="CFHIVAE"/>
<dbReference type="PhylomeDB" id="Q8GXH3"/>
<dbReference type="PRO" id="PR:Q8GXH3"/>
<dbReference type="Proteomes" id="UP000006548">
    <property type="component" value="Chromosome 4"/>
</dbReference>
<dbReference type="ExpressionAtlas" id="Q8GXH3">
    <property type="expression patterns" value="baseline and differential"/>
</dbReference>
<dbReference type="GO" id="GO:0042644">
    <property type="term" value="C:chloroplast nucleoid"/>
    <property type="evidence" value="ECO:0007005"/>
    <property type="project" value="TAIR"/>
</dbReference>
<dbReference type="GO" id="GO:0003697">
    <property type="term" value="F:single-stranded DNA binding"/>
    <property type="evidence" value="ECO:0000314"/>
    <property type="project" value="TAIR"/>
</dbReference>
<dbReference type="GO" id="GO:0006260">
    <property type="term" value="P:DNA replication"/>
    <property type="evidence" value="ECO:0007669"/>
    <property type="project" value="InterPro"/>
</dbReference>
<dbReference type="Gene3D" id="2.40.50.140">
    <property type="entry name" value="Nucleic acid-binding proteins"/>
    <property type="match status" value="1"/>
</dbReference>
<dbReference type="InterPro" id="IPR012340">
    <property type="entry name" value="NA-bd_OB-fold"/>
</dbReference>
<dbReference type="InterPro" id="IPR000424">
    <property type="entry name" value="Primosome_PriB/ssb"/>
</dbReference>
<dbReference type="InterPro" id="IPR011344">
    <property type="entry name" value="ssDNA-bd"/>
</dbReference>
<dbReference type="PANTHER" id="PTHR10302:SF21">
    <property type="entry name" value="PROTEIN OSB2, CHLOROPLASTIC"/>
    <property type="match status" value="1"/>
</dbReference>
<dbReference type="PANTHER" id="PTHR10302">
    <property type="entry name" value="SINGLE-STRANDED DNA-BINDING PROTEIN"/>
    <property type="match status" value="1"/>
</dbReference>
<dbReference type="SUPFAM" id="SSF50249">
    <property type="entry name" value="Nucleic acid-binding proteins"/>
    <property type="match status" value="1"/>
</dbReference>
<dbReference type="PROSITE" id="PS50935">
    <property type="entry name" value="SSB"/>
    <property type="match status" value="1"/>
</dbReference>
<evidence type="ECO:0000255" key="1"/>
<evidence type="ECO:0000255" key="2">
    <source>
        <dbReference type="PROSITE-ProRule" id="PRU00252"/>
    </source>
</evidence>
<evidence type="ECO:0000256" key="3">
    <source>
        <dbReference type="SAM" id="MobiDB-lite"/>
    </source>
</evidence>
<evidence type="ECO:0000269" key="4">
    <source>
    </source>
</evidence>
<evidence type="ECO:0000269" key="5">
    <source>
    </source>
</evidence>
<evidence type="ECO:0000305" key="6"/>
<proteinExistence type="evidence at protein level"/>